<accession>P27012</accession>
<evidence type="ECO:0000305" key="1"/>
<comment type="function">
    <text>S-crystallins are structural components of squids and octopi eye lens. Contains relatively little if any GST activity.</text>
</comment>
<comment type="tissue specificity">
    <text>Lens.</text>
</comment>
<comment type="similarity">
    <text evidence="1">Belongs to the GST superfamily.</text>
</comment>
<dbReference type="EMBL" id="M65187">
    <property type="protein sequence ID" value="AAA29389.1"/>
    <property type="molecule type" value="mRNA"/>
</dbReference>
<dbReference type="PIR" id="D41681">
    <property type="entry name" value="D41681"/>
</dbReference>
<dbReference type="SMR" id="P27012"/>
<dbReference type="GO" id="GO:0004364">
    <property type="term" value="F:glutathione transferase activity"/>
    <property type="evidence" value="ECO:0007669"/>
    <property type="project" value="TreeGrafter"/>
</dbReference>
<dbReference type="GO" id="GO:0005212">
    <property type="term" value="F:structural constituent of eye lens"/>
    <property type="evidence" value="ECO:0007669"/>
    <property type="project" value="UniProtKB-KW"/>
</dbReference>
<dbReference type="GO" id="GO:0006749">
    <property type="term" value="P:glutathione metabolic process"/>
    <property type="evidence" value="ECO:0007669"/>
    <property type="project" value="TreeGrafter"/>
</dbReference>
<dbReference type="CDD" id="cd03192">
    <property type="entry name" value="GST_C_Sigma_like"/>
    <property type="match status" value="1"/>
</dbReference>
<dbReference type="CDD" id="cd03039">
    <property type="entry name" value="GST_N_Sigma_like"/>
    <property type="match status" value="1"/>
</dbReference>
<dbReference type="FunFam" id="3.40.30.10:FF:000035">
    <property type="entry name" value="hematopoietic prostaglandin D synthase"/>
    <property type="match status" value="1"/>
</dbReference>
<dbReference type="Gene3D" id="1.20.1050.10">
    <property type="match status" value="1"/>
</dbReference>
<dbReference type="Gene3D" id="3.40.30.10">
    <property type="entry name" value="Glutaredoxin"/>
    <property type="match status" value="1"/>
</dbReference>
<dbReference type="InterPro" id="IPR010987">
    <property type="entry name" value="Glutathione-S-Trfase_C-like"/>
</dbReference>
<dbReference type="InterPro" id="IPR036282">
    <property type="entry name" value="Glutathione-S-Trfase_C_sf"/>
</dbReference>
<dbReference type="InterPro" id="IPR040079">
    <property type="entry name" value="Glutathione_S-Trfase"/>
</dbReference>
<dbReference type="InterPro" id="IPR004045">
    <property type="entry name" value="Glutathione_S-Trfase_N"/>
</dbReference>
<dbReference type="InterPro" id="IPR004046">
    <property type="entry name" value="GST_C"/>
</dbReference>
<dbReference type="InterPro" id="IPR050213">
    <property type="entry name" value="GST_superfamily"/>
</dbReference>
<dbReference type="InterPro" id="IPR003083">
    <property type="entry name" value="S-crystallin"/>
</dbReference>
<dbReference type="InterPro" id="IPR036249">
    <property type="entry name" value="Thioredoxin-like_sf"/>
</dbReference>
<dbReference type="PANTHER" id="PTHR11571">
    <property type="entry name" value="GLUTATHIONE S-TRANSFERASE"/>
    <property type="match status" value="1"/>
</dbReference>
<dbReference type="PANTHER" id="PTHR11571:SF150">
    <property type="entry name" value="GLUTATHIONE S-TRANSFERASE"/>
    <property type="match status" value="1"/>
</dbReference>
<dbReference type="Pfam" id="PF14497">
    <property type="entry name" value="GST_C_3"/>
    <property type="match status" value="1"/>
</dbReference>
<dbReference type="Pfam" id="PF02798">
    <property type="entry name" value="GST_N"/>
    <property type="match status" value="1"/>
</dbReference>
<dbReference type="PRINTS" id="PR01269">
    <property type="entry name" value="SCRYSTALLIN"/>
</dbReference>
<dbReference type="SFLD" id="SFLDG01205">
    <property type="entry name" value="AMPS.1"/>
    <property type="match status" value="1"/>
</dbReference>
<dbReference type="SFLD" id="SFLDS00019">
    <property type="entry name" value="Glutathione_Transferase_(cytos"/>
    <property type="match status" value="1"/>
</dbReference>
<dbReference type="SUPFAM" id="SSF47616">
    <property type="entry name" value="GST C-terminal domain-like"/>
    <property type="match status" value="1"/>
</dbReference>
<dbReference type="SUPFAM" id="SSF52833">
    <property type="entry name" value="Thioredoxin-like"/>
    <property type="match status" value="1"/>
</dbReference>
<dbReference type="PROSITE" id="PS50405">
    <property type="entry name" value="GST_CTER"/>
    <property type="match status" value="1"/>
</dbReference>
<dbReference type="PROSITE" id="PS50404">
    <property type="entry name" value="GST_NTER"/>
    <property type="match status" value="1"/>
</dbReference>
<feature type="chain" id="PRO_0000185995" description="S-crystallin 4">
    <location>
        <begin position="1"/>
        <end position="215"/>
    </location>
</feature>
<feature type="domain" description="GST N-terminal">
    <location>
        <begin position="2"/>
        <end position="80"/>
    </location>
</feature>
<feature type="domain" description="GST C-terminal">
    <location>
        <begin position="82"/>
        <end position="215"/>
    </location>
</feature>
<keyword id="KW-0273">Eye lens protein</keyword>
<protein>
    <recommendedName>
        <fullName>S-crystallin 4</fullName>
    </recommendedName>
    <alternativeName>
        <fullName>OL4</fullName>
    </alternativeName>
</protein>
<proteinExistence type="evidence at transcript level"/>
<sequence>MPSYTLHYFNHRGRAEICRMLFAAAGVQYNDRRIESSEWGSMRSKMPCSMMPMLELDNKIQIPQSMAMARYLAREFGFHGKNNMDMARVDYISDSFYDILDDYMRMYHDKDGRMMFSRSKDMNSSSEKRMRYQETCRRIFPYLEKTLEMRNGGNQFFMGDQITMADMMCFCALENPLMEDQNILRSYPKLQALRNRVINHPKMSAYLQKRSRTEF</sequence>
<name>SCRY4_ENTDO</name>
<reference key="1">
    <citation type="journal article" date="1991" name="J. Biol. Chem.">
        <title>Crystallins of the octopus lens. Recruitment from detoxification enzymes.</title>
        <authorList>
            <person name="Tomarev S.I."/>
            <person name="Zinovieva R.D."/>
            <person name="Piatigorsky J."/>
        </authorList>
    </citation>
    <scope>NUCLEOTIDE SEQUENCE [MRNA]</scope>
    <source>
        <tissue>Lens</tissue>
    </source>
</reference>
<organism>
    <name type="scientific">Enteroctopus dofleini</name>
    <name type="common">North Pacific giant octopus</name>
    <name type="synonym">Octopus dofleini</name>
    <dbReference type="NCBI Taxonomy" id="267067"/>
    <lineage>
        <taxon>Eukaryota</taxon>
        <taxon>Metazoa</taxon>
        <taxon>Spiralia</taxon>
        <taxon>Lophotrochozoa</taxon>
        <taxon>Mollusca</taxon>
        <taxon>Cephalopoda</taxon>
        <taxon>Coleoidea</taxon>
        <taxon>Octopodiformes</taxon>
        <taxon>Octopoda</taxon>
        <taxon>Incirrata</taxon>
        <taxon>Octopodidae</taxon>
        <taxon>Enteroctopus</taxon>
    </lineage>
</organism>